<feature type="chain" id="PRO_1000026184" description="Large ribosomal subunit protein uL16">
    <location>
        <begin position="1"/>
        <end position="173"/>
    </location>
</feature>
<comment type="similarity">
    <text evidence="1">Belongs to the universal ribosomal protein uL16 family.</text>
</comment>
<sequence length="173" mass="19413">MALRPSKCYREINKPAYTRKKYIRAVPQPKVVHYVNGNKGGDFPVEVHLVVKDDIQIRHNALESARIVGNKYTQNKCGRLGYKFQIRVYPHQVLRENKMASGAGADRISDGMRLSFGKAVGTAARVRKGQKIITISTTPENVIHAKEALRRCNMKMPVKCKIVIGKGAELVKN</sequence>
<reference key="1">
    <citation type="submission" date="2007-06" db="EMBL/GenBank/DDBJ databases">
        <title>Complete sequence of Methanococcus aeolicus Nankai-3.</title>
        <authorList>
            <consortium name="US DOE Joint Genome Institute"/>
            <person name="Copeland A."/>
            <person name="Lucas S."/>
            <person name="Lapidus A."/>
            <person name="Barry K."/>
            <person name="Glavina del Rio T."/>
            <person name="Dalin E."/>
            <person name="Tice H."/>
            <person name="Pitluck S."/>
            <person name="Chain P."/>
            <person name="Malfatti S."/>
            <person name="Shin M."/>
            <person name="Vergez L."/>
            <person name="Schmutz J."/>
            <person name="Larimer F."/>
            <person name="Land M."/>
            <person name="Hauser L."/>
            <person name="Kyrpides N."/>
            <person name="Lykidis A."/>
            <person name="Sieprawska-Lupa M."/>
            <person name="Whitman W.B."/>
            <person name="Richardson P."/>
        </authorList>
    </citation>
    <scope>NUCLEOTIDE SEQUENCE [LARGE SCALE GENOMIC DNA]</scope>
    <source>
        <strain>ATCC BAA-1280 / DSM 17508 / OCM 812 / Nankai-3</strain>
    </source>
</reference>
<name>RL10E_META3</name>
<keyword id="KW-0687">Ribonucleoprotein</keyword>
<keyword id="KW-0689">Ribosomal protein</keyword>
<dbReference type="EMBL" id="CP000743">
    <property type="protein sequence ID" value="ABR55606.1"/>
    <property type="molecule type" value="Genomic_DNA"/>
</dbReference>
<dbReference type="RefSeq" id="WP_011972738.1">
    <property type="nucleotide sequence ID" value="NC_009635.1"/>
</dbReference>
<dbReference type="SMR" id="A6USY4"/>
<dbReference type="STRING" id="419665.Maeo_0013"/>
<dbReference type="GeneID" id="5326844"/>
<dbReference type="KEGG" id="mae:Maeo_0013"/>
<dbReference type="eggNOG" id="arCOG04113">
    <property type="taxonomic scope" value="Archaea"/>
</dbReference>
<dbReference type="HOGENOM" id="CLU_084051_0_2_2"/>
<dbReference type="OrthoDB" id="30538at2157"/>
<dbReference type="Proteomes" id="UP000001106">
    <property type="component" value="Chromosome"/>
</dbReference>
<dbReference type="GO" id="GO:1990904">
    <property type="term" value="C:ribonucleoprotein complex"/>
    <property type="evidence" value="ECO:0007669"/>
    <property type="project" value="UniProtKB-KW"/>
</dbReference>
<dbReference type="GO" id="GO:0005840">
    <property type="term" value="C:ribosome"/>
    <property type="evidence" value="ECO:0007669"/>
    <property type="project" value="UniProtKB-KW"/>
</dbReference>
<dbReference type="GO" id="GO:0003735">
    <property type="term" value="F:structural constituent of ribosome"/>
    <property type="evidence" value="ECO:0007669"/>
    <property type="project" value="InterPro"/>
</dbReference>
<dbReference type="GO" id="GO:0006412">
    <property type="term" value="P:translation"/>
    <property type="evidence" value="ECO:0007669"/>
    <property type="project" value="UniProtKB-UniRule"/>
</dbReference>
<dbReference type="CDD" id="cd01433">
    <property type="entry name" value="Ribosomal_L16_L10e"/>
    <property type="match status" value="1"/>
</dbReference>
<dbReference type="Gene3D" id="3.90.1170.10">
    <property type="entry name" value="Ribosomal protein L10e/L16"/>
    <property type="match status" value="1"/>
</dbReference>
<dbReference type="HAMAP" id="MF_00448">
    <property type="entry name" value="Ribosomal_uL16_arch"/>
    <property type="match status" value="1"/>
</dbReference>
<dbReference type="InterPro" id="IPR047873">
    <property type="entry name" value="Ribosomal_uL16"/>
</dbReference>
<dbReference type="InterPro" id="IPR022981">
    <property type="entry name" value="Ribosomal_uL16_arc"/>
</dbReference>
<dbReference type="InterPro" id="IPR018255">
    <property type="entry name" value="Ribosomal_uL16_CS_euk_arc"/>
</dbReference>
<dbReference type="InterPro" id="IPR016180">
    <property type="entry name" value="Ribosomal_uL16_dom"/>
</dbReference>
<dbReference type="InterPro" id="IPR001197">
    <property type="entry name" value="Ribosomal_uL16_euk_arch"/>
</dbReference>
<dbReference type="InterPro" id="IPR036920">
    <property type="entry name" value="Ribosomal_uL16_sf"/>
</dbReference>
<dbReference type="NCBIfam" id="NF003239">
    <property type="entry name" value="PRK04199.1-4"/>
    <property type="match status" value="1"/>
</dbReference>
<dbReference type="NCBIfam" id="TIGR00279">
    <property type="entry name" value="uL16_euk_arch"/>
    <property type="match status" value="1"/>
</dbReference>
<dbReference type="PANTHER" id="PTHR11726">
    <property type="entry name" value="60S RIBOSOMAL PROTEIN L10"/>
    <property type="match status" value="1"/>
</dbReference>
<dbReference type="Pfam" id="PF00252">
    <property type="entry name" value="Ribosomal_L16"/>
    <property type="match status" value="1"/>
</dbReference>
<dbReference type="PIRSF" id="PIRSF005590">
    <property type="entry name" value="Ribosomal_L10"/>
    <property type="match status" value="1"/>
</dbReference>
<dbReference type="SUPFAM" id="SSF54686">
    <property type="entry name" value="Ribosomal protein L16p/L10e"/>
    <property type="match status" value="1"/>
</dbReference>
<dbReference type="PROSITE" id="PS01257">
    <property type="entry name" value="RIBOSOMAL_L10E"/>
    <property type="match status" value="1"/>
</dbReference>
<gene>
    <name evidence="1" type="primary">rpl10e</name>
    <name type="ordered locus">Maeo_0013</name>
</gene>
<accession>A6USY4</accession>
<proteinExistence type="inferred from homology"/>
<protein>
    <recommendedName>
        <fullName evidence="1">Large ribosomal subunit protein uL16</fullName>
    </recommendedName>
    <alternativeName>
        <fullName evidence="2">50S ribosomal protein L10e</fullName>
    </alternativeName>
</protein>
<evidence type="ECO:0000255" key="1">
    <source>
        <dbReference type="HAMAP-Rule" id="MF_00448"/>
    </source>
</evidence>
<evidence type="ECO:0000305" key="2"/>
<organism>
    <name type="scientific">Methanococcus aeolicus (strain ATCC BAA-1280 / DSM 17508 / OCM 812 / Nankai-3)</name>
    <dbReference type="NCBI Taxonomy" id="419665"/>
    <lineage>
        <taxon>Archaea</taxon>
        <taxon>Methanobacteriati</taxon>
        <taxon>Methanobacteriota</taxon>
        <taxon>Methanomada group</taxon>
        <taxon>Methanococci</taxon>
        <taxon>Methanococcales</taxon>
        <taxon>Methanococcaceae</taxon>
        <taxon>Methanococcus</taxon>
    </lineage>
</organism>